<name>TXF27_CTEON</name>
<comment type="function">
    <text evidence="1 2">Omega-agatoxins are antagonists of voltage-sensitive calcium channels (Cav) (By similarity). Toxic to mice by intracerebroventricular injection.</text>
</comment>
<comment type="subcellular location">
    <subcellularLocation>
        <location evidence="2">Secreted</location>
    </subcellularLocation>
</comment>
<comment type="tissue specificity">
    <text evidence="2">Expressed by the venom gland.</text>
</comment>
<comment type="domain">
    <text evidence="4">The presence of a 'disulfide through disulfide knot' structurally defines this protein as a knottin.</text>
</comment>
<comment type="mass spectrometry"/>
<comment type="similarity">
    <text evidence="4">Belongs to the neurotoxin 04 (omega-agtx) family. 03 (type II/III omega-agtx) subfamily.</text>
</comment>
<keyword id="KW-0108">Calcium channel impairing toxin</keyword>
<keyword id="KW-0903">Direct protein sequencing</keyword>
<keyword id="KW-1015">Disulfide bond</keyword>
<keyword id="KW-0872">Ion channel impairing toxin</keyword>
<keyword id="KW-0960">Knottin</keyword>
<keyword id="KW-0528">Neurotoxin</keyword>
<keyword id="KW-0964">Secreted</keyword>
<keyword id="KW-0800">Toxin</keyword>
<keyword id="KW-1218">Voltage-gated calcium channel impairing toxin</keyword>
<feature type="chain" id="PRO_0000262766" description="U17-ctenitoxin-Co1a">
    <location>
        <begin position="1"/>
        <end position="44" status="greater than"/>
    </location>
</feature>
<feature type="disulfide bond" evidence="4">
    <location>
        <begin position="3"/>
        <end position="20"/>
    </location>
</feature>
<feature type="disulfide bond" evidence="4">
    <location>
        <begin position="10"/>
        <end position="26"/>
    </location>
</feature>
<feature type="disulfide bond" evidence="4">
    <location>
        <begin position="19"/>
        <end position="40"/>
    </location>
</feature>
<feature type="disulfide bond" evidence="4">
    <location>
        <begin position="28"/>
        <end position="38"/>
    </location>
</feature>
<feature type="non-terminal residue" evidence="3">
    <location>
        <position position="44"/>
    </location>
</feature>
<organism>
    <name type="scientific">Ctenus ornatus</name>
    <name type="common">Brazilian spider</name>
    <name type="synonym">Oligoctenus ornatus</name>
    <dbReference type="NCBI Taxonomy" id="406443"/>
    <lineage>
        <taxon>Eukaryota</taxon>
        <taxon>Metazoa</taxon>
        <taxon>Ecdysozoa</taxon>
        <taxon>Arthropoda</taxon>
        <taxon>Chelicerata</taxon>
        <taxon>Arachnida</taxon>
        <taxon>Araneae</taxon>
        <taxon>Araneomorphae</taxon>
        <taxon>Entelegynae</taxon>
        <taxon>Lycosoidea</taxon>
        <taxon>Ctenidae</taxon>
        <taxon>Oligoctenus</taxon>
    </lineage>
</organism>
<sequence>RACIELGEDCDGYKDDCQCCRDNAFCSCYEFFGEKNGCGCAVGH</sequence>
<dbReference type="SMR" id="P85034"/>
<dbReference type="ArachnoServer" id="AS000310">
    <property type="toxin name" value="U17-ctenitoxin-Co1a"/>
</dbReference>
<dbReference type="GO" id="GO:0005576">
    <property type="term" value="C:extracellular region"/>
    <property type="evidence" value="ECO:0007669"/>
    <property type="project" value="UniProtKB-SubCell"/>
</dbReference>
<dbReference type="GO" id="GO:0005246">
    <property type="term" value="F:calcium channel regulator activity"/>
    <property type="evidence" value="ECO:0007669"/>
    <property type="project" value="UniProtKB-KW"/>
</dbReference>
<dbReference type="GO" id="GO:0090729">
    <property type="term" value="F:toxin activity"/>
    <property type="evidence" value="ECO:0007669"/>
    <property type="project" value="UniProtKB-KW"/>
</dbReference>
<dbReference type="InterPro" id="IPR005853">
    <property type="entry name" value="Omega-agatoxin_II/III_CS"/>
</dbReference>
<dbReference type="InterPro" id="IPR013605">
    <property type="entry name" value="Toxin_34"/>
</dbReference>
<dbReference type="Pfam" id="PF08396">
    <property type="entry name" value="Toxin_34"/>
    <property type="match status" value="1"/>
</dbReference>
<dbReference type="PROSITE" id="PS60023">
    <property type="entry name" value="OMEGA_AGA_II_III"/>
    <property type="match status" value="1"/>
</dbReference>
<proteinExistence type="evidence at protein level"/>
<accession>P85034</accession>
<protein>
    <recommendedName>
        <fullName>U17-ctenitoxin-Co1a</fullName>
        <shortName>U17-CNTX-Co1a</shortName>
    </recommendedName>
    <alternativeName>
        <fullName>Neurotoxin Oct F27-10</fullName>
    </alternativeName>
</protein>
<evidence type="ECO:0000250" key="1"/>
<evidence type="ECO:0000269" key="2">
    <source ref="1"/>
</evidence>
<evidence type="ECO:0000303" key="3">
    <source ref="1"/>
</evidence>
<evidence type="ECO:0000305" key="4"/>
<reference evidence="4" key="1">
    <citation type="submission" date="2006-10" db="UniProtKB">
        <title>A new neurotoxin OctF27-10 from venom of Oligoctenus ornatus has sequence similarities with Tx3-4 type toxins from Phoneutria spiders.</title>
        <authorList>
            <person name="Richardson M."/>
            <person name="Goncalves J.M."/>
            <person name="Borges M.H."/>
            <person name="Oliveira C.F.B."/>
            <person name="Rates B.A."/>
            <person name="Bemquerer M.P."/>
            <person name="Pimenta A.M.C."/>
            <person name="Cordeiro M.N."/>
        </authorList>
    </citation>
    <scope>PROTEIN SEQUENCE</scope>
    <scope>FUNCTION</scope>
    <scope>SUBCELLULAR LOCATION</scope>
    <scope>TISSUE SPECIFICITY</scope>
    <scope>MASS SPECTROMETRY</scope>
    <source>
        <tissue evidence="2">Venom</tissue>
    </source>
</reference>